<accession>C0PVN0</accession>
<proteinExistence type="inferred from homology"/>
<name>GCS2_SALPC</name>
<comment type="function">
    <text evidence="1">ATP-dependent carboxylate-amine ligase which exhibits weak glutamate--cysteine ligase activity.</text>
</comment>
<comment type="catalytic activity">
    <reaction evidence="1">
        <text>L-cysteine + L-glutamate + ATP = gamma-L-glutamyl-L-cysteine + ADP + phosphate + H(+)</text>
        <dbReference type="Rhea" id="RHEA:13285"/>
        <dbReference type="ChEBI" id="CHEBI:15378"/>
        <dbReference type="ChEBI" id="CHEBI:29985"/>
        <dbReference type="ChEBI" id="CHEBI:30616"/>
        <dbReference type="ChEBI" id="CHEBI:35235"/>
        <dbReference type="ChEBI" id="CHEBI:43474"/>
        <dbReference type="ChEBI" id="CHEBI:58173"/>
        <dbReference type="ChEBI" id="CHEBI:456216"/>
        <dbReference type="EC" id="6.3.2.2"/>
    </reaction>
</comment>
<comment type="subunit">
    <text evidence="1">Homodimer.</text>
</comment>
<comment type="similarity">
    <text evidence="1">Belongs to the glutamate--cysteine ligase type 2 family. YbdK subfamily.</text>
</comment>
<evidence type="ECO:0000255" key="1">
    <source>
        <dbReference type="HAMAP-Rule" id="MF_01609"/>
    </source>
</evidence>
<sequence>MALNDFHVSEPYTLGIELEMQVINPPGYDLSQDSSTLIDAVKSRLTAGEIKHDITESMLEMATGVCRDIDQAAAQLSAMQHVILQAASEHHLGICGGGTHPFQKWQRQEVCDNERYQRTLENFGYLIQQATVFGQHVHVGCANGDDAIYLLHGLSHFVPHFIALSAASPYMQGSDTRFACARLNIFSAFPDNGPMPWVSNWQEFAGLFRRLSYTTMIDSIKDLHWDIRPSPAFGTVEVRVMDTPLTLDHAINMAGLIQATAHWLLTERPFKPQEQDYLLYKFNRFQACRYGLEGVLTDAYTGDRRRLADDTLRLLDNVTPSARKLGADSAIDALRLQVKKGGNEAQYMREFIADGGSLIGLVQKHCEIWAGQ</sequence>
<feature type="chain" id="PRO_1000185853" description="Putative glutamate--cysteine ligase 2">
    <location>
        <begin position="1"/>
        <end position="372"/>
    </location>
</feature>
<keyword id="KW-0067">ATP-binding</keyword>
<keyword id="KW-0436">Ligase</keyword>
<keyword id="KW-0547">Nucleotide-binding</keyword>
<organism>
    <name type="scientific">Salmonella paratyphi C (strain RKS4594)</name>
    <dbReference type="NCBI Taxonomy" id="476213"/>
    <lineage>
        <taxon>Bacteria</taxon>
        <taxon>Pseudomonadati</taxon>
        <taxon>Pseudomonadota</taxon>
        <taxon>Gammaproteobacteria</taxon>
        <taxon>Enterobacterales</taxon>
        <taxon>Enterobacteriaceae</taxon>
        <taxon>Salmonella</taxon>
    </lineage>
</organism>
<protein>
    <recommendedName>
        <fullName evidence="1">Putative glutamate--cysteine ligase 2</fullName>
        <ecNumber evidence="1">6.3.2.2</ecNumber>
    </recommendedName>
    <alternativeName>
        <fullName evidence="1">Gamma-glutamylcysteine synthetase 2</fullName>
        <shortName evidence="1">GCS 2</shortName>
        <shortName evidence="1">Gamma-GCS 2</shortName>
    </alternativeName>
</protein>
<reference key="1">
    <citation type="journal article" date="2009" name="PLoS ONE">
        <title>Salmonella paratyphi C: genetic divergence from Salmonella choleraesuis and pathogenic convergence with Salmonella typhi.</title>
        <authorList>
            <person name="Liu W.-Q."/>
            <person name="Feng Y."/>
            <person name="Wang Y."/>
            <person name="Zou Q.-H."/>
            <person name="Chen F."/>
            <person name="Guo J.-T."/>
            <person name="Peng Y.-H."/>
            <person name="Jin Y."/>
            <person name="Li Y.-G."/>
            <person name="Hu S.-N."/>
            <person name="Johnston R.N."/>
            <person name="Liu G.-R."/>
            <person name="Liu S.-L."/>
        </authorList>
    </citation>
    <scope>NUCLEOTIDE SEQUENCE [LARGE SCALE GENOMIC DNA]</scope>
    <source>
        <strain>RKS4594</strain>
    </source>
</reference>
<gene>
    <name type="primary">ybdK</name>
    <name type="ordered locus">SPC_0595</name>
</gene>
<dbReference type="EC" id="6.3.2.2" evidence="1"/>
<dbReference type="EMBL" id="CP000857">
    <property type="protein sequence ID" value="ACN44773.1"/>
    <property type="molecule type" value="Genomic_DNA"/>
</dbReference>
<dbReference type="RefSeq" id="WP_001196915.1">
    <property type="nucleotide sequence ID" value="NC_012125.1"/>
</dbReference>
<dbReference type="SMR" id="C0PVN0"/>
<dbReference type="KEGG" id="sei:SPC_0595"/>
<dbReference type="HOGENOM" id="CLU_044848_1_1_6"/>
<dbReference type="Proteomes" id="UP000001599">
    <property type="component" value="Chromosome"/>
</dbReference>
<dbReference type="GO" id="GO:0005524">
    <property type="term" value="F:ATP binding"/>
    <property type="evidence" value="ECO:0007669"/>
    <property type="project" value="UniProtKB-KW"/>
</dbReference>
<dbReference type="GO" id="GO:0004357">
    <property type="term" value="F:glutamate-cysteine ligase activity"/>
    <property type="evidence" value="ECO:0007669"/>
    <property type="project" value="UniProtKB-EC"/>
</dbReference>
<dbReference type="GO" id="GO:0042398">
    <property type="term" value="P:modified amino acid biosynthetic process"/>
    <property type="evidence" value="ECO:0007669"/>
    <property type="project" value="InterPro"/>
</dbReference>
<dbReference type="FunFam" id="3.30.590.20:FF:000002">
    <property type="entry name" value="Putative glutamate--cysteine ligase 2"/>
    <property type="match status" value="1"/>
</dbReference>
<dbReference type="Gene3D" id="3.30.590.20">
    <property type="match status" value="1"/>
</dbReference>
<dbReference type="HAMAP" id="MF_01609">
    <property type="entry name" value="Glu_cys_ligase_2"/>
    <property type="match status" value="1"/>
</dbReference>
<dbReference type="InterPro" id="IPR050141">
    <property type="entry name" value="GCL_type2/YbdK_subfam"/>
</dbReference>
<dbReference type="InterPro" id="IPR006336">
    <property type="entry name" value="GCS2"/>
</dbReference>
<dbReference type="InterPro" id="IPR014746">
    <property type="entry name" value="Gln_synth/guanido_kin_cat_dom"/>
</dbReference>
<dbReference type="InterPro" id="IPR011793">
    <property type="entry name" value="YbdK"/>
</dbReference>
<dbReference type="NCBIfam" id="TIGR02050">
    <property type="entry name" value="gshA_cyan_rel"/>
    <property type="match status" value="1"/>
</dbReference>
<dbReference type="NCBIfam" id="NF010040">
    <property type="entry name" value="PRK13516.1"/>
    <property type="match status" value="1"/>
</dbReference>
<dbReference type="PANTHER" id="PTHR36510">
    <property type="entry name" value="GLUTAMATE--CYSTEINE LIGASE 2-RELATED"/>
    <property type="match status" value="1"/>
</dbReference>
<dbReference type="PANTHER" id="PTHR36510:SF1">
    <property type="entry name" value="GLUTAMATE--CYSTEINE LIGASE 2-RELATED"/>
    <property type="match status" value="1"/>
</dbReference>
<dbReference type="Pfam" id="PF04107">
    <property type="entry name" value="GCS2"/>
    <property type="match status" value="1"/>
</dbReference>
<dbReference type="SUPFAM" id="SSF55931">
    <property type="entry name" value="Glutamine synthetase/guanido kinase"/>
    <property type="match status" value="1"/>
</dbReference>